<proteinExistence type="inferred from homology"/>
<protein>
    <recommendedName>
        <fullName evidence="1">Histidine ammonia-lyase</fullName>
        <shortName evidence="1">Histidase</shortName>
        <ecNumber evidence="1">4.3.1.3</ecNumber>
    </recommendedName>
</protein>
<sequence length="507" mass="53277">MITLTPGHLTLPQLRRIAREPVQLKLDPASFAKIDAGAKAVADIAAKGEPAYGINTGFGRLASTHIPHDQLELLQKNLVLSHAVGVGEPMARSSVRLLLALKLSSLGRGHSGIRREVMDALITLFNADVLPLIPVKGSVGASGDLAPLAHMSAVLLGVGEVFIRGERASALDGLRVAGLAPLTLQAKEGLALLNGTQASTALALDNMFAIEDLYRTALVAGALSVDAAAGSVKPFDARIHELRGHQGQIDAAASYRELLEGSPINQSHRDCDKVQDPYSLRCQPQVMGACLDQMRHAADVLLVEANAVSDNPLIFPDTGEVLSGGNFHAEPVAFAADNLALAAAEIGALAERRIALLIDATLSGLPPFLVKDGGVNSGFMIAHVTAAALASENKTLAHPASVDSLPTSANQEDHVSMATFAARKLADIADNTKHILAIELLAAAQGVDLRAPYHTSPKLAPVMETIRGKVAHYELDHYFAPDIAVIAKLVGERAFAKVAPFSFASEQ</sequence>
<evidence type="ECO:0000255" key="1">
    <source>
        <dbReference type="HAMAP-Rule" id="MF_00229"/>
    </source>
</evidence>
<name>HUTH_BURCH</name>
<reference key="1">
    <citation type="submission" date="2006-08" db="EMBL/GenBank/DDBJ databases">
        <title>Complete sequence of chromosome 1 of Burkholderia cenocepacia HI2424.</title>
        <authorList>
            <person name="Copeland A."/>
            <person name="Lucas S."/>
            <person name="Lapidus A."/>
            <person name="Barry K."/>
            <person name="Detter J.C."/>
            <person name="Glavina del Rio T."/>
            <person name="Hammon N."/>
            <person name="Israni S."/>
            <person name="Pitluck S."/>
            <person name="Chain P."/>
            <person name="Malfatti S."/>
            <person name="Shin M."/>
            <person name="Vergez L."/>
            <person name="Schmutz J."/>
            <person name="Larimer F."/>
            <person name="Land M."/>
            <person name="Hauser L."/>
            <person name="Kyrpides N."/>
            <person name="Kim E."/>
            <person name="LiPuma J.J."/>
            <person name="Gonzalez C.F."/>
            <person name="Konstantinidis K."/>
            <person name="Tiedje J.M."/>
            <person name="Richardson P."/>
        </authorList>
    </citation>
    <scope>NUCLEOTIDE SEQUENCE [LARGE SCALE GENOMIC DNA]</scope>
    <source>
        <strain>HI2424</strain>
    </source>
</reference>
<keyword id="KW-0963">Cytoplasm</keyword>
<keyword id="KW-0369">Histidine metabolism</keyword>
<keyword id="KW-0456">Lyase</keyword>
<feature type="chain" id="PRO_1000021548" description="Histidine ammonia-lyase">
    <location>
        <begin position="1"/>
        <end position="507"/>
    </location>
</feature>
<feature type="modified residue" description="2,3-didehydroalanine (Ser)" evidence="1">
    <location>
        <position position="142"/>
    </location>
</feature>
<feature type="cross-link" description="5-imidazolinone (Ala-Gly)" evidence="1">
    <location>
        <begin position="141"/>
        <end position="143"/>
    </location>
</feature>
<accession>A0K8U6</accession>
<organism>
    <name type="scientific">Burkholderia cenocepacia (strain HI2424)</name>
    <dbReference type="NCBI Taxonomy" id="331272"/>
    <lineage>
        <taxon>Bacteria</taxon>
        <taxon>Pseudomonadati</taxon>
        <taxon>Pseudomonadota</taxon>
        <taxon>Betaproteobacteria</taxon>
        <taxon>Burkholderiales</taxon>
        <taxon>Burkholderiaceae</taxon>
        <taxon>Burkholderia</taxon>
        <taxon>Burkholderia cepacia complex</taxon>
    </lineage>
</organism>
<comment type="catalytic activity">
    <reaction evidence="1">
        <text>L-histidine = trans-urocanate + NH4(+)</text>
        <dbReference type="Rhea" id="RHEA:21232"/>
        <dbReference type="ChEBI" id="CHEBI:17771"/>
        <dbReference type="ChEBI" id="CHEBI:28938"/>
        <dbReference type="ChEBI" id="CHEBI:57595"/>
        <dbReference type="EC" id="4.3.1.3"/>
    </reaction>
</comment>
<comment type="pathway">
    <text evidence="1">Amino-acid degradation; L-histidine degradation into L-glutamate; N-formimidoyl-L-glutamate from L-histidine: step 1/3.</text>
</comment>
<comment type="subcellular location">
    <subcellularLocation>
        <location evidence="1">Cytoplasm</location>
    </subcellularLocation>
</comment>
<comment type="PTM">
    <text evidence="1">Contains an active site 4-methylidene-imidazol-5-one (MIO), which is formed autocatalytically by cyclization and dehydration of residues Ala-Ser-Gly.</text>
</comment>
<comment type="similarity">
    <text evidence="1">Belongs to the PAL/histidase family.</text>
</comment>
<dbReference type="EC" id="4.3.1.3" evidence="1"/>
<dbReference type="EMBL" id="CP000458">
    <property type="protein sequence ID" value="ABK08923.1"/>
    <property type="molecule type" value="Genomic_DNA"/>
</dbReference>
<dbReference type="RefSeq" id="WP_011549424.1">
    <property type="nucleotide sequence ID" value="NC_008542.1"/>
</dbReference>
<dbReference type="SMR" id="A0K8U6"/>
<dbReference type="KEGG" id="bch:Bcen2424_2172"/>
<dbReference type="HOGENOM" id="CLU_014801_4_0_4"/>
<dbReference type="UniPathway" id="UPA00379">
    <property type="reaction ID" value="UER00549"/>
</dbReference>
<dbReference type="GO" id="GO:0005737">
    <property type="term" value="C:cytoplasm"/>
    <property type="evidence" value="ECO:0007669"/>
    <property type="project" value="UniProtKB-SubCell"/>
</dbReference>
<dbReference type="GO" id="GO:0004397">
    <property type="term" value="F:histidine ammonia-lyase activity"/>
    <property type="evidence" value="ECO:0007669"/>
    <property type="project" value="UniProtKB-UniRule"/>
</dbReference>
<dbReference type="GO" id="GO:0019556">
    <property type="term" value="P:L-histidine catabolic process to glutamate and formamide"/>
    <property type="evidence" value="ECO:0007669"/>
    <property type="project" value="UniProtKB-UniPathway"/>
</dbReference>
<dbReference type="GO" id="GO:0019557">
    <property type="term" value="P:L-histidine catabolic process to glutamate and formate"/>
    <property type="evidence" value="ECO:0007669"/>
    <property type="project" value="UniProtKB-UniPathway"/>
</dbReference>
<dbReference type="CDD" id="cd00332">
    <property type="entry name" value="PAL-HAL"/>
    <property type="match status" value="1"/>
</dbReference>
<dbReference type="FunFam" id="1.10.275.10:FF:000005">
    <property type="entry name" value="Histidine ammonia-lyase"/>
    <property type="match status" value="1"/>
</dbReference>
<dbReference type="FunFam" id="1.20.200.10:FF:000003">
    <property type="entry name" value="Histidine ammonia-lyase"/>
    <property type="match status" value="1"/>
</dbReference>
<dbReference type="Gene3D" id="1.20.200.10">
    <property type="entry name" value="Fumarase/aspartase (Central domain)"/>
    <property type="match status" value="1"/>
</dbReference>
<dbReference type="Gene3D" id="1.10.275.10">
    <property type="entry name" value="Fumarase/aspartase (N-terminal domain)"/>
    <property type="match status" value="1"/>
</dbReference>
<dbReference type="HAMAP" id="MF_00229">
    <property type="entry name" value="His_ammonia_lyase"/>
    <property type="match status" value="1"/>
</dbReference>
<dbReference type="InterPro" id="IPR001106">
    <property type="entry name" value="Aromatic_Lyase"/>
</dbReference>
<dbReference type="InterPro" id="IPR024083">
    <property type="entry name" value="Fumarase/histidase_N"/>
</dbReference>
<dbReference type="InterPro" id="IPR005921">
    <property type="entry name" value="HutH"/>
</dbReference>
<dbReference type="InterPro" id="IPR008948">
    <property type="entry name" value="L-Aspartase-like"/>
</dbReference>
<dbReference type="InterPro" id="IPR022313">
    <property type="entry name" value="Phe/His_NH3-lyase_AS"/>
</dbReference>
<dbReference type="NCBIfam" id="TIGR01225">
    <property type="entry name" value="hutH"/>
    <property type="match status" value="1"/>
</dbReference>
<dbReference type="NCBIfam" id="NF006871">
    <property type="entry name" value="PRK09367.1"/>
    <property type="match status" value="1"/>
</dbReference>
<dbReference type="PANTHER" id="PTHR10362">
    <property type="entry name" value="HISTIDINE AMMONIA-LYASE"/>
    <property type="match status" value="1"/>
</dbReference>
<dbReference type="Pfam" id="PF00221">
    <property type="entry name" value="Lyase_aromatic"/>
    <property type="match status" value="1"/>
</dbReference>
<dbReference type="SUPFAM" id="SSF48557">
    <property type="entry name" value="L-aspartase-like"/>
    <property type="match status" value="1"/>
</dbReference>
<dbReference type="PROSITE" id="PS00488">
    <property type="entry name" value="PAL_HISTIDASE"/>
    <property type="match status" value="1"/>
</dbReference>
<gene>
    <name evidence="1" type="primary">hutH</name>
    <name type="ordered locus">Bcen2424_2172</name>
</gene>